<gene>
    <name evidence="2" type="primary">accD</name>
</gene>
<reference key="1">
    <citation type="online journal article" date="1995" name="Plant Gene Register">
        <title>The rps16, accD, psaI, ORF 203, ORF 151, ORF 103, ORF 229 and petA gene cluster in the chloroplast genome of soybean.</title>
        <authorList>
            <person name="Reverdatto S.V."/>
            <person name="Beilinson V."/>
            <person name="Nielsen N.C."/>
        </authorList>
        <locator>PGR95-051</locator>
    </citation>
    <scope>NUCLEOTIDE SEQUENCE [GENOMIC DNA]</scope>
    <source>
        <strain>cv. Resnik</strain>
        <tissue>Leaf</tissue>
    </source>
</reference>
<reference key="2">
    <citation type="journal article" date="2005" name="Plant Mol. Biol.">
        <title>Complete chloroplast genome sequence of Glycine max and comparative analyses with other legume genomes.</title>
        <authorList>
            <person name="Saski C."/>
            <person name="Lee S.-B."/>
            <person name="Daniell H."/>
            <person name="Wood T.C."/>
            <person name="Tomkins J."/>
            <person name="Kim H.-G."/>
            <person name="Jansen R.K."/>
        </authorList>
    </citation>
    <scope>NUCLEOTIDE SEQUENCE [LARGE SCALE GENOMIC DNA]</scope>
    <source>
        <strain>cv. PI 437654</strain>
    </source>
</reference>
<reference key="3">
    <citation type="journal article" date="2001" name="J. Biol. Chem.">
        <title>Chloroplast RNA editing required for functional acetyl-CoA carboxylase in plants.</title>
        <authorList>
            <person name="Sasaki Y."/>
            <person name="Kozaki A."/>
            <person name="Ohmori A."/>
            <person name="Iguchi H."/>
            <person name="Nagano Y."/>
        </authorList>
    </citation>
    <scope>RNA EDITING</scope>
    <source>
        <strain>cv. Enrei</strain>
    </source>
</reference>
<dbReference type="EC" id="2.1.3.15" evidence="2"/>
<dbReference type="EMBL" id="U26948">
    <property type="protein sequence ID" value="AAA80643.1"/>
    <property type="status" value="ALT_SEQ"/>
    <property type="molecule type" value="Genomic_DNA"/>
</dbReference>
<dbReference type="EMBL" id="DQ317523">
    <property type="protein sequence ID" value="ABC25134.1"/>
    <property type="status" value="ALT_SEQ"/>
    <property type="molecule type" value="Genomic_DNA"/>
</dbReference>
<dbReference type="PIR" id="T06341">
    <property type="entry name" value="T06341"/>
</dbReference>
<dbReference type="RefSeq" id="YP_538774.1">
    <property type="nucleotide sequence ID" value="NC_007942.1"/>
</dbReference>
<dbReference type="SMR" id="P49158"/>
<dbReference type="FunCoup" id="P49158">
    <property type="interactions" value="524"/>
</dbReference>
<dbReference type="STRING" id="3847.P49158"/>
<dbReference type="PaxDb" id="3847-GLYMA15G39765.1"/>
<dbReference type="GeneID" id="3989306"/>
<dbReference type="KEGG" id="gmx:3989306"/>
<dbReference type="InParanoid" id="P49158"/>
<dbReference type="UniPathway" id="UPA00655">
    <property type="reaction ID" value="UER00711"/>
</dbReference>
<dbReference type="Proteomes" id="UP000008827">
    <property type="component" value="Chloroplast"/>
</dbReference>
<dbReference type="GO" id="GO:0009317">
    <property type="term" value="C:acetyl-CoA carboxylase complex"/>
    <property type="evidence" value="ECO:0007669"/>
    <property type="project" value="InterPro"/>
</dbReference>
<dbReference type="GO" id="GO:0009570">
    <property type="term" value="C:chloroplast stroma"/>
    <property type="evidence" value="ECO:0007669"/>
    <property type="project" value="UniProtKB-SubCell"/>
</dbReference>
<dbReference type="GO" id="GO:0003989">
    <property type="term" value="F:acetyl-CoA carboxylase activity"/>
    <property type="evidence" value="ECO:0007669"/>
    <property type="project" value="InterPro"/>
</dbReference>
<dbReference type="GO" id="GO:0005524">
    <property type="term" value="F:ATP binding"/>
    <property type="evidence" value="ECO:0007669"/>
    <property type="project" value="UniProtKB-KW"/>
</dbReference>
<dbReference type="GO" id="GO:0016743">
    <property type="term" value="F:carboxyl- or carbamoyltransferase activity"/>
    <property type="evidence" value="ECO:0007669"/>
    <property type="project" value="UniProtKB-UniRule"/>
</dbReference>
<dbReference type="GO" id="GO:0008270">
    <property type="term" value="F:zinc ion binding"/>
    <property type="evidence" value="ECO:0007669"/>
    <property type="project" value="UniProtKB-UniRule"/>
</dbReference>
<dbReference type="GO" id="GO:0006633">
    <property type="term" value="P:fatty acid biosynthetic process"/>
    <property type="evidence" value="ECO:0000318"/>
    <property type="project" value="GO_Central"/>
</dbReference>
<dbReference type="GO" id="GO:2001295">
    <property type="term" value="P:malonyl-CoA biosynthetic process"/>
    <property type="evidence" value="ECO:0007669"/>
    <property type="project" value="UniProtKB-UniRule"/>
</dbReference>
<dbReference type="Gene3D" id="3.90.226.10">
    <property type="entry name" value="2-enoyl-CoA Hydratase, Chain A, domain 1"/>
    <property type="match status" value="1"/>
</dbReference>
<dbReference type="HAMAP" id="MF_01395">
    <property type="entry name" value="AcetylCoA_CT_beta"/>
    <property type="match status" value="1"/>
</dbReference>
<dbReference type="InterPro" id="IPR034733">
    <property type="entry name" value="AcCoA_carboxyl_beta"/>
</dbReference>
<dbReference type="InterPro" id="IPR000438">
    <property type="entry name" value="Acetyl_CoA_COase_Trfase_b_su"/>
</dbReference>
<dbReference type="InterPro" id="IPR029045">
    <property type="entry name" value="ClpP/crotonase-like_dom_sf"/>
</dbReference>
<dbReference type="InterPro" id="IPR011762">
    <property type="entry name" value="COA_CT_N"/>
</dbReference>
<dbReference type="NCBIfam" id="TIGR00515">
    <property type="entry name" value="accD"/>
    <property type="match status" value="1"/>
</dbReference>
<dbReference type="PANTHER" id="PTHR42995">
    <property type="entry name" value="ACETYL-COENZYME A CARBOXYLASE CARBOXYL TRANSFERASE SUBUNIT BETA, CHLOROPLASTIC"/>
    <property type="match status" value="1"/>
</dbReference>
<dbReference type="PANTHER" id="PTHR42995:SF5">
    <property type="entry name" value="ACETYL-COENZYME A CARBOXYLASE CARBOXYL TRANSFERASE SUBUNIT BETA, CHLOROPLASTIC"/>
    <property type="match status" value="1"/>
</dbReference>
<dbReference type="Pfam" id="PF01039">
    <property type="entry name" value="Carboxyl_trans"/>
    <property type="match status" value="1"/>
</dbReference>
<dbReference type="PRINTS" id="PR01070">
    <property type="entry name" value="ACCCTRFRASEB"/>
</dbReference>
<dbReference type="SUPFAM" id="SSF52096">
    <property type="entry name" value="ClpP/crotonase"/>
    <property type="match status" value="1"/>
</dbReference>
<dbReference type="PROSITE" id="PS50980">
    <property type="entry name" value="COA_CT_NTER"/>
    <property type="match status" value="1"/>
</dbReference>
<name>ACCD_SOYBN</name>
<feature type="chain" id="PRO_0000199794" description="Acetyl-coenzyme A carboxylase carboxyl transferase subunit beta, chloroplastic">
    <location>
        <begin position="1"/>
        <end position="432"/>
    </location>
</feature>
<feature type="domain" description="CoA carboxyltransferase N-terminal" evidence="3">
    <location>
        <begin position="165"/>
        <end position="432"/>
    </location>
</feature>
<feature type="zinc finger region" description="C4-type" evidence="2">
    <location>
        <begin position="169"/>
        <end position="191"/>
    </location>
</feature>
<feature type="region of interest" description="Disordered" evidence="4">
    <location>
        <begin position="127"/>
        <end position="154"/>
    </location>
</feature>
<feature type="compositionally biased region" description="Low complexity" evidence="4">
    <location>
        <begin position="128"/>
        <end position="149"/>
    </location>
</feature>
<feature type="binding site" evidence="2">
    <location>
        <position position="169"/>
    </location>
    <ligand>
        <name>Zn(2+)</name>
        <dbReference type="ChEBI" id="CHEBI:29105"/>
    </ligand>
</feature>
<feature type="binding site" evidence="2">
    <location>
        <position position="172"/>
    </location>
    <ligand>
        <name>Zn(2+)</name>
        <dbReference type="ChEBI" id="CHEBI:29105"/>
    </ligand>
</feature>
<feature type="binding site" evidence="2">
    <location>
        <position position="188"/>
    </location>
    <ligand>
        <name>Zn(2+)</name>
        <dbReference type="ChEBI" id="CHEBI:29105"/>
    </ligand>
</feature>
<feature type="binding site" evidence="2">
    <location>
        <position position="191"/>
    </location>
    <ligand>
        <name>Zn(2+)</name>
        <dbReference type="ChEBI" id="CHEBI:29105"/>
    </ligand>
</feature>
<feature type="sequence conflict" description="In Ref. 1; AAA80643." evidence="6" ref="1">
    <original>Y</original>
    <variation>N</variation>
    <location>
        <position position="115"/>
    </location>
</feature>
<feature type="sequence conflict" description="In Ref. 1; AAA80643." evidence="6" ref="1">
    <original>D</original>
    <variation>N</variation>
    <location>
        <position position="129"/>
    </location>
</feature>
<feature type="sequence conflict" description="In Ref. 1; AAA80643." evidence="6" ref="1">
    <original>F</original>
    <variation>S</variation>
    <location>
        <position position="423"/>
    </location>
</feature>
<protein>
    <recommendedName>
        <fullName evidence="2">Acetyl-coenzyme A carboxylase carboxyl transferase subunit beta, chloroplastic</fullName>
        <shortName evidence="2">ACCase subunit beta</shortName>
        <shortName evidence="2">Acetyl-CoA carboxylase carboxyltransferase subunit beta</shortName>
        <ecNumber evidence="2">2.1.3.15</ecNumber>
    </recommendedName>
</protein>
<comment type="function">
    <text evidence="2">Component of the acetyl coenzyme A carboxylase (ACC) complex. Biotin carboxylase (BC) catalyzes the carboxylation of biotin on its carrier protein (BCCP) and then the CO(2) group is transferred by the transcarboxylase to acetyl-CoA to form malonyl-CoA.</text>
</comment>
<comment type="catalytic activity">
    <reaction evidence="2">
        <text>N(6)-carboxybiotinyl-L-lysyl-[protein] + acetyl-CoA = N(6)-biotinyl-L-lysyl-[protein] + malonyl-CoA</text>
        <dbReference type="Rhea" id="RHEA:54728"/>
        <dbReference type="Rhea" id="RHEA-COMP:10505"/>
        <dbReference type="Rhea" id="RHEA-COMP:10506"/>
        <dbReference type="ChEBI" id="CHEBI:57288"/>
        <dbReference type="ChEBI" id="CHEBI:57384"/>
        <dbReference type="ChEBI" id="CHEBI:83144"/>
        <dbReference type="ChEBI" id="CHEBI:83145"/>
        <dbReference type="EC" id="2.1.3.15"/>
    </reaction>
</comment>
<comment type="cofactor">
    <cofactor evidence="2">
        <name>Zn(2+)</name>
        <dbReference type="ChEBI" id="CHEBI:29105"/>
    </cofactor>
    <text evidence="2">Binds 1 zinc ion per subunit.</text>
</comment>
<comment type="pathway">
    <text evidence="2">Lipid metabolism; malonyl-CoA biosynthesis; malonyl-CoA from acetyl-CoA: step 1/1.</text>
</comment>
<comment type="subunit">
    <text evidence="1">Acetyl-CoA carboxylase is a heterohexamer composed of biotin carboxyl carrier protein, biotin carboxylase and 2 subunits each of ACCase subunit alpha and ACCase plastid-coded subunit beta (accD).</text>
</comment>
<comment type="subcellular location">
    <subcellularLocation>
        <location evidence="2">Plastid</location>
        <location evidence="2">Chloroplast stroma</location>
    </subcellularLocation>
</comment>
<comment type="RNA editing">
    <location>
        <position position="206" evidence="5"/>
    </location>
</comment>
<comment type="similarity">
    <text evidence="2">Belongs to the AccD/PCCB family.</text>
</comment>
<sequence length="432" mass="48993">MEKWWFNSMLFNRKLEYRCELSKSMDSLGPIENTSLREDPKILTDIEKKIHRDLDYLEMEGFFSSDLNTVSKNDDDHYMYETQFSFNNNITSFIDSCIESFNLGDIDKYNDIYFYSYIFLKGRNCSESDNSSTSIITSTNDTNDSDSTIGESSNNLDESQKYKHLWLECENCYGLNYKKFFKSKMNICEYCGYHLKMGSSDRIELLIDSGTWNPMDEDMVSLDPIEFHSEEEPYKDRIDSYQRKTGLTEAVQTGTGQLNGIPVAIGIMDFQFMGGSMGSAVGEKITRLVEYATNQLLPLILVCASGGARMQEGSLSLIQMAKISSALYDYQKNKKLFYVSILTSPTTGGVTASFGMLGDIIIAEPNAYIAFAGKRVIEQTLNKAVPEGSQAAEYLFHKGLFDSIVPRNLLKGVLSELFQFHNFFSLTKNDKA</sequence>
<keyword id="KW-0067">ATP-binding</keyword>
<keyword id="KW-0150">Chloroplast</keyword>
<keyword id="KW-0275">Fatty acid biosynthesis</keyword>
<keyword id="KW-0276">Fatty acid metabolism</keyword>
<keyword id="KW-0444">Lipid biosynthesis</keyword>
<keyword id="KW-0443">Lipid metabolism</keyword>
<keyword id="KW-0479">Metal-binding</keyword>
<keyword id="KW-0547">Nucleotide-binding</keyword>
<keyword id="KW-0934">Plastid</keyword>
<keyword id="KW-1185">Reference proteome</keyword>
<keyword id="KW-0691">RNA editing</keyword>
<keyword id="KW-0808">Transferase</keyword>
<keyword id="KW-0862">Zinc</keyword>
<keyword id="KW-0863">Zinc-finger</keyword>
<evidence type="ECO:0000250" key="1"/>
<evidence type="ECO:0000255" key="2">
    <source>
        <dbReference type="HAMAP-Rule" id="MF_01395"/>
    </source>
</evidence>
<evidence type="ECO:0000255" key="3">
    <source>
        <dbReference type="PROSITE-ProRule" id="PRU01136"/>
    </source>
</evidence>
<evidence type="ECO:0000256" key="4">
    <source>
        <dbReference type="SAM" id="MobiDB-lite"/>
    </source>
</evidence>
<evidence type="ECO:0000269" key="5">
    <source>
    </source>
</evidence>
<evidence type="ECO:0000305" key="6"/>
<accession>P49158</accession>
<accession>Q2PMS4</accession>
<proteinExistence type="evidence at transcript level"/>
<organism>
    <name type="scientific">Glycine max</name>
    <name type="common">Soybean</name>
    <name type="synonym">Glycine hispida</name>
    <dbReference type="NCBI Taxonomy" id="3847"/>
    <lineage>
        <taxon>Eukaryota</taxon>
        <taxon>Viridiplantae</taxon>
        <taxon>Streptophyta</taxon>
        <taxon>Embryophyta</taxon>
        <taxon>Tracheophyta</taxon>
        <taxon>Spermatophyta</taxon>
        <taxon>Magnoliopsida</taxon>
        <taxon>eudicotyledons</taxon>
        <taxon>Gunneridae</taxon>
        <taxon>Pentapetalae</taxon>
        <taxon>rosids</taxon>
        <taxon>fabids</taxon>
        <taxon>Fabales</taxon>
        <taxon>Fabaceae</taxon>
        <taxon>Papilionoideae</taxon>
        <taxon>50 kb inversion clade</taxon>
        <taxon>NPAAA clade</taxon>
        <taxon>indigoferoid/millettioid clade</taxon>
        <taxon>Phaseoleae</taxon>
        <taxon>Glycine</taxon>
        <taxon>Glycine subgen. Soja</taxon>
    </lineage>
</organism>
<geneLocation type="chloroplast"/>